<proteinExistence type="evidence at protein level"/>
<gene>
    <name evidence="1" type="primary">pfkA</name>
    <name type="synonym">pfk</name>
    <name type="ordered locus">SA1521</name>
</gene>
<name>PFKA_STAAN</name>
<reference key="1">
    <citation type="journal article" date="2001" name="Lancet">
        <title>Whole genome sequencing of meticillin-resistant Staphylococcus aureus.</title>
        <authorList>
            <person name="Kuroda M."/>
            <person name="Ohta T."/>
            <person name="Uchiyama I."/>
            <person name="Baba T."/>
            <person name="Yuzawa H."/>
            <person name="Kobayashi I."/>
            <person name="Cui L."/>
            <person name="Oguchi A."/>
            <person name="Aoki K."/>
            <person name="Nagai Y."/>
            <person name="Lian J.-Q."/>
            <person name="Ito T."/>
            <person name="Kanamori M."/>
            <person name="Matsumaru H."/>
            <person name="Maruyama A."/>
            <person name="Murakami H."/>
            <person name="Hosoyama A."/>
            <person name="Mizutani-Ui Y."/>
            <person name="Takahashi N.K."/>
            <person name="Sawano T."/>
            <person name="Inoue R."/>
            <person name="Kaito C."/>
            <person name="Sekimizu K."/>
            <person name="Hirakawa H."/>
            <person name="Kuhara S."/>
            <person name="Goto S."/>
            <person name="Yabuzaki J."/>
            <person name="Kanehisa M."/>
            <person name="Yamashita A."/>
            <person name="Oshima K."/>
            <person name="Furuya K."/>
            <person name="Yoshino C."/>
            <person name="Shiba T."/>
            <person name="Hattori M."/>
            <person name="Ogasawara N."/>
            <person name="Hayashi H."/>
            <person name="Hiramatsu K."/>
        </authorList>
    </citation>
    <scope>NUCLEOTIDE SEQUENCE [LARGE SCALE GENOMIC DNA]</scope>
    <source>
        <strain>N315</strain>
    </source>
</reference>
<reference key="2">
    <citation type="journal article" date="2005" name="J. Microbiol. Methods">
        <title>Correlation of proteomic and transcriptomic profiles of Staphylococcus aureus during the post-exponential phase of growth.</title>
        <authorList>
            <person name="Scherl A."/>
            <person name="Francois P."/>
            <person name="Bento M."/>
            <person name="Deshusses J.M."/>
            <person name="Charbonnier Y."/>
            <person name="Converset V."/>
            <person name="Huyghe A."/>
            <person name="Walter N."/>
            <person name="Hoogland C."/>
            <person name="Appel R.D."/>
            <person name="Sanchez J.-C."/>
            <person name="Zimmermann-Ivol C.G."/>
            <person name="Corthals G.L."/>
            <person name="Hochstrasser D.F."/>
            <person name="Schrenzel J."/>
        </authorList>
    </citation>
    <scope>IDENTIFICATION BY MASS SPECTROMETRY</scope>
    <source>
        <strain>N315</strain>
    </source>
</reference>
<reference key="3">
    <citation type="submission" date="2007-10" db="UniProtKB">
        <title>Shotgun proteomic analysis of total and membrane protein extracts of S. aureus strain N315.</title>
        <authorList>
            <person name="Vaezzadeh A.R."/>
            <person name="Deshusses J."/>
            <person name="Lescuyer P."/>
            <person name="Hochstrasser D.F."/>
        </authorList>
    </citation>
    <scope>IDENTIFICATION BY MASS SPECTROMETRY [LARGE SCALE ANALYSIS]</scope>
    <source>
        <strain>N315</strain>
    </source>
</reference>
<comment type="function">
    <text evidence="1">Catalyzes the phosphorylation of D-fructose 6-phosphate to fructose 1,6-bisphosphate by ATP, the first committing step of glycolysis.</text>
</comment>
<comment type="catalytic activity">
    <reaction evidence="1">
        <text>beta-D-fructose 6-phosphate + ATP = beta-D-fructose 1,6-bisphosphate + ADP + H(+)</text>
        <dbReference type="Rhea" id="RHEA:16109"/>
        <dbReference type="ChEBI" id="CHEBI:15378"/>
        <dbReference type="ChEBI" id="CHEBI:30616"/>
        <dbReference type="ChEBI" id="CHEBI:32966"/>
        <dbReference type="ChEBI" id="CHEBI:57634"/>
        <dbReference type="ChEBI" id="CHEBI:456216"/>
        <dbReference type="EC" id="2.7.1.11"/>
    </reaction>
</comment>
<comment type="cofactor">
    <cofactor evidence="1">
        <name>Mg(2+)</name>
        <dbReference type="ChEBI" id="CHEBI:18420"/>
    </cofactor>
</comment>
<comment type="activity regulation">
    <text evidence="1">Allosterically activated by ADP and other diphosphonucleosides, and allosterically inhibited by phosphoenolpyruvate.</text>
</comment>
<comment type="pathway">
    <text evidence="1">Carbohydrate degradation; glycolysis; D-glyceraldehyde 3-phosphate and glycerone phosphate from D-glucose: step 3/4.</text>
</comment>
<comment type="subunit">
    <text evidence="1">Homotetramer.</text>
</comment>
<comment type="subcellular location">
    <subcellularLocation>
        <location evidence="1">Cytoplasm</location>
    </subcellularLocation>
</comment>
<comment type="similarity">
    <text evidence="1">Belongs to the phosphofructokinase type A (PFKA) family. ATP-dependent PFK group I subfamily. Prokaryotic clade 'B1' sub-subfamily.</text>
</comment>
<comment type="sequence caution" evidence="2">
    <conflict type="erroneous initiation">
        <sequence resource="EMBL-CDS" id="BAB42788"/>
    </conflict>
</comment>
<accession>P99165</accession>
<accession>Q99TG4</accession>
<sequence>MKKIAVLTSGGDSPGMNAAVRAVVRTAIYNEIEVYGVYHGYQGLLNDDIHKLELGSVGDTIQRGGTFLYSARCPEFKEQEVRKVAIENLRKRGIEGLVVIGGDGSYRGAQRISEECKEIQTIGIPGTIDNDINGTDFTIGFDTALNTIIGLVDKIRDTASSHARTFIIEAMGRDCGDLALWAGLSVGAETIVVPEVKTDIKEIADKIEQGIKRGKKHSIVLVAEGCMTAQDCQKELSQYINVDNRVSVLGHVQRGGSPTGADRVLASRLGGYAVDLLMQGETAKGVGIKNNKIVATSFDEIFDGKDHKFDYSLYELANKLSI</sequence>
<organism>
    <name type="scientific">Staphylococcus aureus (strain N315)</name>
    <dbReference type="NCBI Taxonomy" id="158879"/>
    <lineage>
        <taxon>Bacteria</taxon>
        <taxon>Bacillati</taxon>
        <taxon>Bacillota</taxon>
        <taxon>Bacilli</taxon>
        <taxon>Bacillales</taxon>
        <taxon>Staphylococcaceae</taxon>
        <taxon>Staphylococcus</taxon>
    </lineage>
</organism>
<feature type="chain" id="PRO_0000111978" description="ATP-dependent 6-phosphofructokinase">
    <location>
        <begin position="1"/>
        <end position="322"/>
    </location>
</feature>
<feature type="active site" description="Proton acceptor" evidence="1">
    <location>
        <position position="129"/>
    </location>
</feature>
<feature type="binding site" evidence="1">
    <location>
        <position position="11"/>
    </location>
    <ligand>
        <name>ATP</name>
        <dbReference type="ChEBI" id="CHEBI:30616"/>
    </ligand>
</feature>
<feature type="binding site" evidence="1">
    <location>
        <begin position="21"/>
        <end position="25"/>
    </location>
    <ligand>
        <name>ADP</name>
        <dbReference type="ChEBI" id="CHEBI:456216"/>
        <note>allosteric activator; ligand shared between dimeric partners</note>
    </ligand>
</feature>
<feature type="binding site" evidence="1">
    <location>
        <begin position="72"/>
        <end position="73"/>
    </location>
    <ligand>
        <name>ATP</name>
        <dbReference type="ChEBI" id="CHEBI:30616"/>
    </ligand>
</feature>
<feature type="binding site" evidence="1">
    <location>
        <begin position="102"/>
        <end position="105"/>
    </location>
    <ligand>
        <name>ATP</name>
        <dbReference type="ChEBI" id="CHEBI:30616"/>
    </ligand>
</feature>
<feature type="binding site" evidence="1">
    <location>
        <position position="103"/>
    </location>
    <ligand>
        <name>Mg(2+)</name>
        <dbReference type="ChEBI" id="CHEBI:18420"/>
        <note>catalytic</note>
    </ligand>
</feature>
<feature type="binding site" description="in other chain" evidence="1">
    <location>
        <begin position="127"/>
        <end position="129"/>
    </location>
    <ligand>
        <name>substrate</name>
        <note>ligand shared between dimeric partners</note>
    </ligand>
</feature>
<feature type="binding site" description="in other chain" evidence="1">
    <location>
        <position position="156"/>
    </location>
    <ligand>
        <name>ADP</name>
        <dbReference type="ChEBI" id="CHEBI:456216"/>
        <note>allosteric activator; ligand shared between dimeric partners</note>
    </ligand>
</feature>
<feature type="binding site" evidence="1">
    <location>
        <position position="164"/>
    </location>
    <ligand>
        <name>substrate</name>
        <note>ligand shared between dimeric partners</note>
    </ligand>
</feature>
<feature type="binding site" description="in other chain" evidence="1">
    <location>
        <begin position="171"/>
        <end position="173"/>
    </location>
    <ligand>
        <name>substrate</name>
        <note>ligand shared between dimeric partners</note>
    </ligand>
</feature>
<feature type="binding site" description="in other chain" evidence="1">
    <location>
        <begin position="187"/>
        <end position="189"/>
    </location>
    <ligand>
        <name>ADP</name>
        <dbReference type="ChEBI" id="CHEBI:456216"/>
        <note>allosteric activator; ligand shared between dimeric partners</note>
    </ligand>
</feature>
<feature type="binding site" description="in other chain" evidence="1">
    <location>
        <position position="213"/>
    </location>
    <ligand>
        <name>ADP</name>
        <dbReference type="ChEBI" id="CHEBI:456216"/>
        <note>allosteric activator; ligand shared between dimeric partners</note>
    </ligand>
</feature>
<feature type="binding site" description="in other chain" evidence="1">
    <location>
        <begin position="215"/>
        <end position="217"/>
    </location>
    <ligand>
        <name>ADP</name>
        <dbReference type="ChEBI" id="CHEBI:456216"/>
        <note>allosteric activator; ligand shared between dimeric partners</note>
    </ligand>
</feature>
<feature type="binding site" description="in other chain" evidence="1">
    <location>
        <position position="224"/>
    </location>
    <ligand>
        <name>substrate</name>
        <note>ligand shared between dimeric partners</note>
    </ligand>
</feature>
<feature type="binding site" evidence="1">
    <location>
        <position position="245"/>
    </location>
    <ligand>
        <name>substrate</name>
        <note>ligand shared between dimeric partners</note>
    </ligand>
</feature>
<feature type="binding site" description="in other chain" evidence="1">
    <location>
        <begin position="251"/>
        <end position="254"/>
    </location>
    <ligand>
        <name>substrate</name>
        <note>ligand shared between dimeric partners</note>
    </ligand>
</feature>
<protein>
    <recommendedName>
        <fullName evidence="1">ATP-dependent 6-phosphofructokinase</fullName>
        <shortName evidence="1">ATP-PFK</shortName>
        <shortName evidence="1">Phosphofructokinase</shortName>
        <ecNumber evidence="1">2.7.1.11</ecNumber>
    </recommendedName>
    <alternativeName>
        <fullName evidence="1">Phosphohexokinase</fullName>
    </alternativeName>
</protein>
<keyword id="KW-0021">Allosteric enzyme</keyword>
<keyword id="KW-0067">ATP-binding</keyword>
<keyword id="KW-0963">Cytoplasm</keyword>
<keyword id="KW-0324">Glycolysis</keyword>
<keyword id="KW-0418">Kinase</keyword>
<keyword id="KW-0460">Magnesium</keyword>
<keyword id="KW-0479">Metal-binding</keyword>
<keyword id="KW-0547">Nucleotide-binding</keyword>
<keyword id="KW-0808">Transferase</keyword>
<dbReference type="EC" id="2.7.1.11" evidence="1"/>
<dbReference type="EMBL" id="BA000018">
    <property type="protein sequence ID" value="BAB42788.1"/>
    <property type="status" value="ALT_INIT"/>
    <property type="molecule type" value="Genomic_DNA"/>
</dbReference>
<dbReference type="PIR" id="G89953">
    <property type="entry name" value="G89953"/>
</dbReference>
<dbReference type="RefSeq" id="WP_000717561.1">
    <property type="nucleotide sequence ID" value="NC_002745.2"/>
</dbReference>
<dbReference type="SMR" id="P99165"/>
<dbReference type="EnsemblBacteria" id="BAB42788">
    <property type="protein sequence ID" value="BAB42788"/>
    <property type="gene ID" value="BAB42788"/>
</dbReference>
<dbReference type="KEGG" id="sau:SA1521"/>
<dbReference type="HOGENOM" id="CLU_020655_0_1_9"/>
<dbReference type="UniPathway" id="UPA00109">
    <property type="reaction ID" value="UER00182"/>
</dbReference>
<dbReference type="GO" id="GO:0005945">
    <property type="term" value="C:6-phosphofructokinase complex"/>
    <property type="evidence" value="ECO:0007669"/>
    <property type="project" value="TreeGrafter"/>
</dbReference>
<dbReference type="GO" id="GO:0003872">
    <property type="term" value="F:6-phosphofructokinase activity"/>
    <property type="evidence" value="ECO:0007669"/>
    <property type="project" value="UniProtKB-UniRule"/>
</dbReference>
<dbReference type="GO" id="GO:0016208">
    <property type="term" value="F:AMP binding"/>
    <property type="evidence" value="ECO:0007669"/>
    <property type="project" value="TreeGrafter"/>
</dbReference>
<dbReference type="GO" id="GO:0005524">
    <property type="term" value="F:ATP binding"/>
    <property type="evidence" value="ECO:0007669"/>
    <property type="project" value="UniProtKB-KW"/>
</dbReference>
<dbReference type="GO" id="GO:0070095">
    <property type="term" value="F:fructose-6-phosphate binding"/>
    <property type="evidence" value="ECO:0007669"/>
    <property type="project" value="TreeGrafter"/>
</dbReference>
<dbReference type="GO" id="GO:0042802">
    <property type="term" value="F:identical protein binding"/>
    <property type="evidence" value="ECO:0007669"/>
    <property type="project" value="TreeGrafter"/>
</dbReference>
<dbReference type="GO" id="GO:0046872">
    <property type="term" value="F:metal ion binding"/>
    <property type="evidence" value="ECO:0007669"/>
    <property type="project" value="UniProtKB-KW"/>
</dbReference>
<dbReference type="GO" id="GO:0048029">
    <property type="term" value="F:monosaccharide binding"/>
    <property type="evidence" value="ECO:0007669"/>
    <property type="project" value="TreeGrafter"/>
</dbReference>
<dbReference type="GO" id="GO:0061621">
    <property type="term" value="P:canonical glycolysis"/>
    <property type="evidence" value="ECO:0007669"/>
    <property type="project" value="TreeGrafter"/>
</dbReference>
<dbReference type="GO" id="GO:0030388">
    <property type="term" value="P:fructose 1,6-bisphosphate metabolic process"/>
    <property type="evidence" value="ECO:0007669"/>
    <property type="project" value="TreeGrafter"/>
</dbReference>
<dbReference type="GO" id="GO:0006002">
    <property type="term" value="P:fructose 6-phosphate metabolic process"/>
    <property type="evidence" value="ECO:0007669"/>
    <property type="project" value="InterPro"/>
</dbReference>
<dbReference type="FunFam" id="3.40.50.450:FF:000001">
    <property type="entry name" value="ATP-dependent 6-phosphofructokinase"/>
    <property type="match status" value="1"/>
</dbReference>
<dbReference type="FunFam" id="3.40.50.460:FF:000002">
    <property type="entry name" value="ATP-dependent 6-phosphofructokinase"/>
    <property type="match status" value="1"/>
</dbReference>
<dbReference type="Gene3D" id="3.40.50.450">
    <property type="match status" value="1"/>
</dbReference>
<dbReference type="Gene3D" id="3.40.50.460">
    <property type="entry name" value="Phosphofructokinase domain"/>
    <property type="match status" value="1"/>
</dbReference>
<dbReference type="HAMAP" id="MF_00339">
    <property type="entry name" value="Phosphofructokinase_I_B1"/>
    <property type="match status" value="1"/>
</dbReference>
<dbReference type="InterPro" id="IPR022953">
    <property type="entry name" value="ATP_PFK"/>
</dbReference>
<dbReference type="InterPro" id="IPR012003">
    <property type="entry name" value="ATP_PFK_prok-type"/>
</dbReference>
<dbReference type="InterPro" id="IPR012828">
    <property type="entry name" value="PFKA_ATP_prok"/>
</dbReference>
<dbReference type="InterPro" id="IPR015912">
    <property type="entry name" value="Phosphofructokinase_CS"/>
</dbReference>
<dbReference type="InterPro" id="IPR000023">
    <property type="entry name" value="Phosphofructokinase_dom"/>
</dbReference>
<dbReference type="InterPro" id="IPR035966">
    <property type="entry name" value="PKF_sf"/>
</dbReference>
<dbReference type="NCBIfam" id="TIGR02482">
    <property type="entry name" value="PFKA_ATP"/>
    <property type="match status" value="1"/>
</dbReference>
<dbReference type="NCBIfam" id="NF002872">
    <property type="entry name" value="PRK03202.1"/>
    <property type="match status" value="1"/>
</dbReference>
<dbReference type="PANTHER" id="PTHR13697:SF4">
    <property type="entry name" value="ATP-DEPENDENT 6-PHOSPHOFRUCTOKINASE"/>
    <property type="match status" value="1"/>
</dbReference>
<dbReference type="PANTHER" id="PTHR13697">
    <property type="entry name" value="PHOSPHOFRUCTOKINASE"/>
    <property type="match status" value="1"/>
</dbReference>
<dbReference type="Pfam" id="PF00365">
    <property type="entry name" value="PFK"/>
    <property type="match status" value="1"/>
</dbReference>
<dbReference type="PIRSF" id="PIRSF000532">
    <property type="entry name" value="ATP_PFK_prok"/>
    <property type="match status" value="1"/>
</dbReference>
<dbReference type="PRINTS" id="PR00476">
    <property type="entry name" value="PHFRCTKINASE"/>
</dbReference>
<dbReference type="SUPFAM" id="SSF53784">
    <property type="entry name" value="Phosphofructokinase"/>
    <property type="match status" value="1"/>
</dbReference>
<dbReference type="PROSITE" id="PS00433">
    <property type="entry name" value="PHOSPHOFRUCTOKINASE"/>
    <property type="match status" value="1"/>
</dbReference>
<evidence type="ECO:0000255" key="1">
    <source>
        <dbReference type="HAMAP-Rule" id="MF_00339"/>
    </source>
</evidence>
<evidence type="ECO:0000305" key="2"/>